<accession>Q3UD82</accession>
<accession>Q3UDE4</accession>
<accession>Q3UDU5</accession>
<accession>Q8VCB5</accession>
<accession>Q9CYY3</accession>
<proteinExistence type="evidence at transcript level"/>
<name>PARP8_MOUSE</name>
<protein>
    <recommendedName>
        <fullName evidence="4">Protein mono-ADP-ribosyltransferase PARP8</fullName>
        <ecNumber evidence="1">2.4.2.-</ecNumber>
    </recommendedName>
    <alternativeName>
        <fullName evidence="1">ADP-ribosyltransferase diphtheria toxin-like 16</fullName>
        <shortName evidence="1">ARTD16</shortName>
    </alternativeName>
    <alternativeName>
        <fullName evidence="1">Poly [ADP-ribose] polymerase 8</fullName>
        <shortName evidence="1">PARP-8</shortName>
    </alternativeName>
</protein>
<sequence>MGMCSRQERIQKDIDVVIQKSRAEKDCLFADFRYSDSTFTFTYVGGPKSVSYSVHVSEDYPDNTYVSSSENDEDVLVTTDPIPVIFHRIATELRKTNDINCCLSIRSKLQKENGEESRQNSTVEEDSEGDNDSEEFYYGGQVNYDGELHKHPQLEADLSAVRELYGPHAVSLREYGAIDDVDIDLHIDVSFLDEEIAVAWEVIRTEPIIVRLHCSLTQYLNGPVPTVDVFQISTKERFGLGHQLKKIMQTFVSQQWKQSKDKSNCPHGKKLSEKKVKSPLHLFSTLRRSPSYPPPGCGKSKSKLKPEQDGISKTHKLLRRTCSSTVKADDMCAKSHRTFGRSLSSDPRAEQAMSTIKSHKLLGRPCPSAGKQEDCLTLKSHKLLTRSCSGDPRCEHNTNLKPHKLLSRSYSSNLRMEELYGLKNHKLLSKSYSSAPKTSKMEHFKEPNAEGRRLSLTSGLIGILTPSSSSSQPPTNGAKSIPIRDRGFLVQTIEFAEQRIPVLNEYCVVCDEPHVFQNGPMLRPTVCERELCVFAFQTLGVMNEAADEIATGAQVVDLLVSMCRSALESPRKVVIFEPYPSVVDPNDPQMLAFNPRKKNYDRVMKALDSITSIREMTQAPYLEIKKQMDKQDPLAHPLLQWVISSNRSHIVKLPVNRQLKFMHTPHQFLLLSSPPAKESNFRAAKKLFGSTFAFHGSHIENWHSILRNGLVVASNTRLQLHGAMYGSGIYLSPMSSISFGYSGMNKKQKVSSKDEPASSSKSSNASQSQKKGQQSQFLQSRNLKCIALCEVITSPDLHKHGEIWVVPNTDHVCTRFFFVYEDGQVGDANINTQEGGIHKEILRVIGNQTATG</sequence>
<organism>
    <name type="scientific">Mus musculus</name>
    <name type="common">Mouse</name>
    <dbReference type="NCBI Taxonomy" id="10090"/>
    <lineage>
        <taxon>Eukaryota</taxon>
        <taxon>Metazoa</taxon>
        <taxon>Chordata</taxon>
        <taxon>Craniata</taxon>
        <taxon>Vertebrata</taxon>
        <taxon>Euteleostomi</taxon>
        <taxon>Mammalia</taxon>
        <taxon>Eutheria</taxon>
        <taxon>Euarchontoglires</taxon>
        <taxon>Glires</taxon>
        <taxon>Rodentia</taxon>
        <taxon>Myomorpha</taxon>
        <taxon>Muroidea</taxon>
        <taxon>Muridae</taxon>
        <taxon>Murinae</taxon>
        <taxon>Mus</taxon>
        <taxon>Mus</taxon>
    </lineage>
</organism>
<evidence type="ECO:0000250" key="1">
    <source>
        <dbReference type="UniProtKB" id="Q8N3A8"/>
    </source>
</evidence>
<evidence type="ECO:0000255" key="2">
    <source>
        <dbReference type="PROSITE-ProRule" id="PRU00397"/>
    </source>
</evidence>
<evidence type="ECO:0000256" key="3">
    <source>
        <dbReference type="SAM" id="MobiDB-lite"/>
    </source>
</evidence>
<evidence type="ECO:0000305" key="4"/>
<evidence type="ECO:0000312" key="5">
    <source>
        <dbReference type="MGI" id="MGI:1098713"/>
    </source>
</evidence>
<feature type="chain" id="PRO_0000252434" description="Protein mono-ADP-ribosyltransferase PARP8">
    <location>
        <begin position="1"/>
        <end position="852"/>
    </location>
</feature>
<feature type="domain" description="PARP catalytic" evidence="2">
    <location>
        <begin position="615"/>
        <end position="842"/>
    </location>
</feature>
<feature type="region of interest" description="Disordered" evidence="3">
    <location>
        <begin position="113"/>
        <end position="134"/>
    </location>
</feature>
<feature type="region of interest" description="Disordered" evidence="3">
    <location>
        <begin position="289"/>
        <end position="310"/>
    </location>
</feature>
<feature type="region of interest" description="Disordered" evidence="3">
    <location>
        <begin position="748"/>
        <end position="775"/>
    </location>
</feature>
<feature type="compositionally biased region" description="Acidic residues" evidence="3">
    <location>
        <begin position="123"/>
        <end position="134"/>
    </location>
</feature>
<feature type="compositionally biased region" description="Low complexity" evidence="3">
    <location>
        <begin position="757"/>
        <end position="775"/>
    </location>
</feature>
<feature type="modified residue" description="ADP-ribosylcysteine" evidence="1">
    <location>
        <position position="332"/>
    </location>
</feature>
<feature type="modified residue" description="ADP-ribosylcysteine" evidence="1">
    <location>
        <position position="366"/>
    </location>
</feature>
<feature type="modified residue" description="ADP-ribosylcysteine" evidence="1">
    <location>
        <position position="375"/>
    </location>
</feature>
<feature type="modified residue" description="ADP-ribosylcysteine" evidence="1">
    <location>
        <position position="394"/>
    </location>
</feature>
<feature type="sequence conflict" description="In Ref. 1; BAE29166." evidence="4" ref="1">
    <original>N</original>
    <variation>D</variation>
    <location>
        <position position="143"/>
    </location>
</feature>
<feature type="sequence conflict" description="In Ref. 2; AAH21881." evidence="4" ref="2">
    <original>D</original>
    <variation>E</variation>
    <location>
        <position position="330"/>
    </location>
</feature>
<feature type="sequence conflict" description="In Ref. 1; BAB28711." evidence="4" ref="1">
    <original>P</original>
    <variation>L</variation>
    <location>
        <position position="570"/>
    </location>
</feature>
<feature type="sequence conflict" description="In Ref. 1; BAE29166." evidence="4" ref="1">
    <original>N</original>
    <variation>S</variation>
    <location>
        <position position="764"/>
    </location>
</feature>
<dbReference type="EC" id="2.4.2.-" evidence="1"/>
<dbReference type="EMBL" id="AK013206">
    <property type="protein sequence ID" value="BAB28711.2"/>
    <property type="molecule type" value="mRNA"/>
</dbReference>
<dbReference type="EMBL" id="AK149918">
    <property type="protein sequence ID" value="BAE29166.1"/>
    <property type="molecule type" value="mRNA"/>
</dbReference>
<dbReference type="EMBL" id="AK150113">
    <property type="protein sequence ID" value="BAE29317.1"/>
    <property type="molecule type" value="mRNA"/>
</dbReference>
<dbReference type="EMBL" id="AK150208">
    <property type="protein sequence ID" value="BAE29379.1"/>
    <property type="molecule type" value="mRNA"/>
</dbReference>
<dbReference type="EMBL" id="BC021315">
    <property type="protein sequence ID" value="AAH21315.1"/>
    <property type="status" value="ALT_INIT"/>
    <property type="molecule type" value="mRNA"/>
</dbReference>
<dbReference type="EMBL" id="BC021881">
    <property type="protein sequence ID" value="AAH21881.1"/>
    <property type="status" value="ALT_INIT"/>
    <property type="molecule type" value="mRNA"/>
</dbReference>
<dbReference type="RefSeq" id="NP_001413994.1">
    <property type="nucleotide sequence ID" value="NM_001427065.1"/>
</dbReference>
<dbReference type="RefSeq" id="NP_001413996.1">
    <property type="nucleotide sequence ID" value="NM_001427067.1"/>
</dbReference>
<dbReference type="FunCoup" id="Q3UD82">
    <property type="interactions" value="632"/>
</dbReference>
<dbReference type="STRING" id="10090.ENSMUSP00000022239"/>
<dbReference type="iPTMnet" id="Q3UD82"/>
<dbReference type="PhosphoSitePlus" id="Q3UD82"/>
<dbReference type="SwissPalm" id="Q3UD82"/>
<dbReference type="PaxDb" id="10090-ENSMUSP00000022239"/>
<dbReference type="ProteomicsDB" id="287958"/>
<dbReference type="Antibodypedia" id="23287">
    <property type="antibodies" value="124 antibodies from 22 providers"/>
</dbReference>
<dbReference type="Ensembl" id="ENSMUST00000223949.2">
    <property type="protein sequence ID" value="ENSMUSP00000152911.2"/>
    <property type="gene ID" value="ENSMUSG00000021725.10"/>
</dbReference>
<dbReference type="GeneID" id="52552"/>
<dbReference type="UCSC" id="uc007ryi.1">
    <property type="organism name" value="mouse"/>
</dbReference>
<dbReference type="AGR" id="MGI:1098713"/>
<dbReference type="MGI" id="MGI:1098713">
    <property type="gene designation" value="Parp8"/>
</dbReference>
<dbReference type="VEuPathDB" id="HostDB:ENSMUSG00000021725"/>
<dbReference type="eggNOG" id="ENOG502QPRC">
    <property type="taxonomic scope" value="Eukaryota"/>
</dbReference>
<dbReference type="GeneTree" id="ENSGT00950000183129"/>
<dbReference type="InParanoid" id="Q3UD82"/>
<dbReference type="OMA" id="XEYGAID"/>
<dbReference type="OrthoDB" id="109543at2759"/>
<dbReference type="PhylomeDB" id="Q3UD82"/>
<dbReference type="Reactome" id="R-MMU-197264">
    <property type="pathway name" value="Nicotinamide salvaging"/>
</dbReference>
<dbReference type="ChiTaRS" id="Parp8">
    <property type="organism name" value="mouse"/>
</dbReference>
<dbReference type="PRO" id="PR:Q3UD82"/>
<dbReference type="Proteomes" id="UP000000589">
    <property type="component" value="Chromosome 13"/>
</dbReference>
<dbReference type="RNAct" id="Q3UD82">
    <property type="molecule type" value="protein"/>
</dbReference>
<dbReference type="Bgee" id="ENSMUSG00000021725">
    <property type="expression patterns" value="Expressed in morula and 262 other cell types or tissues"/>
</dbReference>
<dbReference type="ExpressionAtlas" id="Q3UD82">
    <property type="expression patterns" value="baseline and differential"/>
</dbReference>
<dbReference type="GO" id="GO:0003950">
    <property type="term" value="F:NAD+ poly-ADP-ribosyltransferase activity"/>
    <property type="evidence" value="ECO:0007669"/>
    <property type="project" value="InterPro"/>
</dbReference>
<dbReference type="GO" id="GO:1990404">
    <property type="term" value="F:NAD+-protein mono-ADP-ribosyltransferase activity"/>
    <property type="evidence" value="ECO:0000250"/>
    <property type="project" value="UniProtKB"/>
</dbReference>
<dbReference type="GO" id="GO:0140803">
    <property type="term" value="F:NAD+-protein-cysteine ADP-ribosyltransferase activity"/>
    <property type="evidence" value="ECO:0007669"/>
    <property type="project" value="RHEA"/>
</dbReference>
<dbReference type="GO" id="GO:0016779">
    <property type="term" value="F:nucleotidyltransferase activity"/>
    <property type="evidence" value="ECO:0007669"/>
    <property type="project" value="UniProtKB-KW"/>
</dbReference>
<dbReference type="GO" id="GO:0070213">
    <property type="term" value="P:protein auto-ADP-ribosylation"/>
    <property type="evidence" value="ECO:0000250"/>
    <property type="project" value="UniProtKB"/>
</dbReference>
<dbReference type="CDD" id="cd01341">
    <property type="entry name" value="ADP_ribosyl"/>
    <property type="match status" value="2"/>
</dbReference>
<dbReference type="FunFam" id="3.90.228.10:FF:000007">
    <property type="entry name" value="Poly [ADP-ribose] polymerase"/>
    <property type="match status" value="1"/>
</dbReference>
<dbReference type="Gene3D" id="3.90.228.10">
    <property type="match status" value="1"/>
</dbReference>
<dbReference type="InterPro" id="IPR051838">
    <property type="entry name" value="ARTD_PARP"/>
</dbReference>
<dbReference type="InterPro" id="IPR012317">
    <property type="entry name" value="Poly(ADP-ribose)pol_cat_dom"/>
</dbReference>
<dbReference type="PANTHER" id="PTHR21328">
    <property type="entry name" value="POLY ADP-RIBOSE POLYMERASE FAMILY, MEMBER PARP"/>
    <property type="match status" value="1"/>
</dbReference>
<dbReference type="Pfam" id="PF00644">
    <property type="entry name" value="PARP"/>
    <property type="match status" value="1"/>
</dbReference>
<dbReference type="SUPFAM" id="SSF56399">
    <property type="entry name" value="ADP-ribosylation"/>
    <property type="match status" value="1"/>
</dbReference>
<dbReference type="PROSITE" id="PS51059">
    <property type="entry name" value="PARP_CATALYTIC"/>
    <property type="match status" value="1"/>
</dbReference>
<gene>
    <name evidence="5" type="primary">Parp8</name>
    <name evidence="5" type="synonym">D13Ertd275e</name>
</gene>
<keyword id="KW-0013">ADP-ribosylation</keyword>
<keyword id="KW-0328">Glycosyltransferase</keyword>
<keyword id="KW-0520">NAD</keyword>
<keyword id="KW-0548">Nucleotidyltransferase</keyword>
<keyword id="KW-1185">Reference proteome</keyword>
<keyword id="KW-0808">Transferase</keyword>
<reference key="1">
    <citation type="journal article" date="2005" name="Science">
        <title>The transcriptional landscape of the mammalian genome.</title>
        <authorList>
            <person name="Carninci P."/>
            <person name="Kasukawa T."/>
            <person name="Katayama S."/>
            <person name="Gough J."/>
            <person name="Frith M.C."/>
            <person name="Maeda N."/>
            <person name="Oyama R."/>
            <person name="Ravasi T."/>
            <person name="Lenhard B."/>
            <person name="Wells C."/>
            <person name="Kodzius R."/>
            <person name="Shimokawa K."/>
            <person name="Bajic V.B."/>
            <person name="Brenner S.E."/>
            <person name="Batalov S."/>
            <person name="Forrest A.R."/>
            <person name="Zavolan M."/>
            <person name="Davis M.J."/>
            <person name="Wilming L.G."/>
            <person name="Aidinis V."/>
            <person name="Allen J.E."/>
            <person name="Ambesi-Impiombato A."/>
            <person name="Apweiler R."/>
            <person name="Aturaliya R.N."/>
            <person name="Bailey T.L."/>
            <person name="Bansal M."/>
            <person name="Baxter L."/>
            <person name="Beisel K.W."/>
            <person name="Bersano T."/>
            <person name="Bono H."/>
            <person name="Chalk A.M."/>
            <person name="Chiu K.P."/>
            <person name="Choudhary V."/>
            <person name="Christoffels A."/>
            <person name="Clutterbuck D.R."/>
            <person name="Crowe M.L."/>
            <person name="Dalla E."/>
            <person name="Dalrymple B.P."/>
            <person name="de Bono B."/>
            <person name="Della Gatta G."/>
            <person name="di Bernardo D."/>
            <person name="Down T."/>
            <person name="Engstrom P."/>
            <person name="Fagiolini M."/>
            <person name="Faulkner G."/>
            <person name="Fletcher C.F."/>
            <person name="Fukushima T."/>
            <person name="Furuno M."/>
            <person name="Futaki S."/>
            <person name="Gariboldi M."/>
            <person name="Georgii-Hemming P."/>
            <person name="Gingeras T.R."/>
            <person name="Gojobori T."/>
            <person name="Green R.E."/>
            <person name="Gustincich S."/>
            <person name="Harbers M."/>
            <person name="Hayashi Y."/>
            <person name="Hensch T.K."/>
            <person name="Hirokawa N."/>
            <person name="Hill D."/>
            <person name="Huminiecki L."/>
            <person name="Iacono M."/>
            <person name="Ikeo K."/>
            <person name="Iwama A."/>
            <person name="Ishikawa T."/>
            <person name="Jakt M."/>
            <person name="Kanapin A."/>
            <person name="Katoh M."/>
            <person name="Kawasawa Y."/>
            <person name="Kelso J."/>
            <person name="Kitamura H."/>
            <person name="Kitano H."/>
            <person name="Kollias G."/>
            <person name="Krishnan S.P."/>
            <person name="Kruger A."/>
            <person name="Kummerfeld S.K."/>
            <person name="Kurochkin I.V."/>
            <person name="Lareau L.F."/>
            <person name="Lazarevic D."/>
            <person name="Lipovich L."/>
            <person name="Liu J."/>
            <person name="Liuni S."/>
            <person name="McWilliam S."/>
            <person name="Madan Babu M."/>
            <person name="Madera M."/>
            <person name="Marchionni L."/>
            <person name="Matsuda H."/>
            <person name="Matsuzawa S."/>
            <person name="Miki H."/>
            <person name="Mignone F."/>
            <person name="Miyake S."/>
            <person name="Morris K."/>
            <person name="Mottagui-Tabar S."/>
            <person name="Mulder N."/>
            <person name="Nakano N."/>
            <person name="Nakauchi H."/>
            <person name="Ng P."/>
            <person name="Nilsson R."/>
            <person name="Nishiguchi S."/>
            <person name="Nishikawa S."/>
            <person name="Nori F."/>
            <person name="Ohara O."/>
            <person name="Okazaki Y."/>
            <person name="Orlando V."/>
            <person name="Pang K.C."/>
            <person name="Pavan W.J."/>
            <person name="Pavesi G."/>
            <person name="Pesole G."/>
            <person name="Petrovsky N."/>
            <person name="Piazza S."/>
            <person name="Reed J."/>
            <person name="Reid J.F."/>
            <person name="Ring B.Z."/>
            <person name="Ringwald M."/>
            <person name="Rost B."/>
            <person name="Ruan Y."/>
            <person name="Salzberg S.L."/>
            <person name="Sandelin A."/>
            <person name="Schneider C."/>
            <person name="Schoenbach C."/>
            <person name="Sekiguchi K."/>
            <person name="Semple C.A."/>
            <person name="Seno S."/>
            <person name="Sessa L."/>
            <person name="Sheng Y."/>
            <person name="Shibata Y."/>
            <person name="Shimada H."/>
            <person name="Shimada K."/>
            <person name="Silva D."/>
            <person name="Sinclair B."/>
            <person name="Sperling S."/>
            <person name="Stupka E."/>
            <person name="Sugiura K."/>
            <person name="Sultana R."/>
            <person name="Takenaka Y."/>
            <person name="Taki K."/>
            <person name="Tammoja K."/>
            <person name="Tan S.L."/>
            <person name="Tang S."/>
            <person name="Taylor M.S."/>
            <person name="Tegner J."/>
            <person name="Teichmann S.A."/>
            <person name="Ueda H.R."/>
            <person name="van Nimwegen E."/>
            <person name="Verardo R."/>
            <person name="Wei C.L."/>
            <person name="Yagi K."/>
            <person name="Yamanishi H."/>
            <person name="Zabarovsky E."/>
            <person name="Zhu S."/>
            <person name="Zimmer A."/>
            <person name="Hide W."/>
            <person name="Bult C."/>
            <person name="Grimmond S.M."/>
            <person name="Teasdale R.D."/>
            <person name="Liu E.T."/>
            <person name="Brusic V."/>
            <person name="Quackenbush J."/>
            <person name="Wahlestedt C."/>
            <person name="Mattick J.S."/>
            <person name="Hume D.A."/>
            <person name="Kai C."/>
            <person name="Sasaki D."/>
            <person name="Tomaru Y."/>
            <person name="Fukuda S."/>
            <person name="Kanamori-Katayama M."/>
            <person name="Suzuki M."/>
            <person name="Aoki J."/>
            <person name="Arakawa T."/>
            <person name="Iida J."/>
            <person name="Imamura K."/>
            <person name="Itoh M."/>
            <person name="Kato T."/>
            <person name="Kawaji H."/>
            <person name="Kawagashira N."/>
            <person name="Kawashima T."/>
            <person name="Kojima M."/>
            <person name="Kondo S."/>
            <person name="Konno H."/>
            <person name="Nakano K."/>
            <person name="Ninomiya N."/>
            <person name="Nishio T."/>
            <person name="Okada M."/>
            <person name="Plessy C."/>
            <person name="Shibata K."/>
            <person name="Shiraki T."/>
            <person name="Suzuki S."/>
            <person name="Tagami M."/>
            <person name="Waki K."/>
            <person name="Watahiki A."/>
            <person name="Okamura-Oho Y."/>
            <person name="Suzuki H."/>
            <person name="Kawai J."/>
            <person name="Hayashizaki Y."/>
        </authorList>
    </citation>
    <scope>NUCLEOTIDE SEQUENCE [LARGE SCALE MRNA]</scope>
    <source>
        <strain>C57BL/6J</strain>
        <tissue>Bone marrow</tissue>
        <tissue>Embryo</tissue>
    </source>
</reference>
<reference key="2">
    <citation type="journal article" date="2004" name="Genome Res.">
        <title>The status, quality, and expansion of the NIH full-length cDNA project: the Mammalian Gene Collection (MGC).</title>
        <authorList>
            <consortium name="The MGC Project Team"/>
        </authorList>
    </citation>
    <scope>NUCLEOTIDE SEQUENCE [LARGE SCALE MRNA]</scope>
    <source>
        <strain>FVB/N</strain>
        <tissue>Mammary tumor</tissue>
    </source>
</reference>
<comment type="function">
    <text evidence="1">Mono-ADP-ribosyltransferase that mediates mono-ADP-ribosylation of target proteins.</text>
</comment>
<comment type="catalytic activity">
    <reaction evidence="1">
        <text>L-cysteinyl-[protein] + NAD(+) = S-(ADP-D-ribosyl)-L-cysteinyl-[protein] + nicotinamide + H(+)</text>
        <dbReference type="Rhea" id="RHEA:56612"/>
        <dbReference type="Rhea" id="RHEA-COMP:10131"/>
        <dbReference type="Rhea" id="RHEA-COMP:14624"/>
        <dbReference type="ChEBI" id="CHEBI:15378"/>
        <dbReference type="ChEBI" id="CHEBI:17154"/>
        <dbReference type="ChEBI" id="CHEBI:29950"/>
        <dbReference type="ChEBI" id="CHEBI:57540"/>
        <dbReference type="ChEBI" id="CHEBI:140607"/>
    </reaction>
</comment>
<comment type="PTM">
    <text evidence="1">Auto-mono-ADP-ribosylated.</text>
</comment>
<comment type="similarity">
    <text evidence="4">Belongs to the ARTD/PARP family.</text>
</comment>
<comment type="sequence caution" evidence="4">
    <conflict type="erroneous initiation">
        <sequence resource="EMBL-CDS" id="AAH21315"/>
    </conflict>
</comment>
<comment type="sequence caution" evidence="4">
    <conflict type="erroneous initiation">
        <sequence resource="EMBL-CDS" id="AAH21881"/>
    </conflict>
</comment>